<feature type="chain" id="PRO_0000137743" description="Argininosuccinate lyase">
    <location>
        <begin position="1"/>
        <end position="473"/>
    </location>
</feature>
<gene>
    <name evidence="1" type="primary">argH</name>
    <name type="ordered locus">BPP1433</name>
</gene>
<protein>
    <recommendedName>
        <fullName evidence="1">Argininosuccinate lyase</fullName>
        <shortName evidence="1">ASAL</shortName>
        <ecNumber evidence="1">4.3.2.1</ecNumber>
    </recommendedName>
    <alternativeName>
        <fullName evidence="1">Arginosuccinase</fullName>
    </alternativeName>
</protein>
<organism>
    <name type="scientific">Bordetella parapertussis (strain 12822 / ATCC BAA-587 / NCTC 13253)</name>
    <dbReference type="NCBI Taxonomy" id="257311"/>
    <lineage>
        <taxon>Bacteria</taxon>
        <taxon>Pseudomonadati</taxon>
        <taxon>Pseudomonadota</taxon>
        <taxon>Betaproteobacteria</taxon>
        <taxon>Burkholderiales</taxon>
        <taxon>Alcaligenaceae</taxon>
        <taxon>Bordetella</taxon>
    </lineage>
</organism>
<comment type="catalytic activity">
    <reaction evidence="1">
        <text>2-(N(omega)-L-arginino)succinate = fumarate + L-arginine</text>
        <dbReference type="Rhea" id="RHEA:24020"/>
        <dbReference type="ChEBI" id="CHEBI:29806"/>
        <dbReference type="ChEBI" id="CHEBI:32682"/>
        <dbReference type="ChEBI" id="CHEBI:57472"/>
        <dbReference type="EC" id="4.3.2.1"/>
    </reaction>
</comment>
<comment type="pathway">
    <text evidence="1">Amino-acid biosynthesis; L-arginine biosynthesis; L-arginine from L-ornithine and carbamoyl phosphate: step 3/3.</text>
</comment>
<comment type="subcellular location">
    <subcellularLocation>
        <location evidence="1">Cytoplasm</location>
    </subcellularLocation>
</comment>
<comment type="similarity">
    <text evidence="1">Belongs to the lyase 1 family. Argininosuccinate lyase subfamily.</text>
</comment>
<comment type="sequence caution" evidence="2">
    <conflict type="erroneous initiation">
        <sequence resource="EMBL-CDS" id="CAE36735"/>
    </conflict>
</comment>
<evidence type="ECO:0000255" key="1">
    <source>
        <dbReference type="HAMAP-Rule" id="MF_00006"/>
    </source>
</evidence>
<evidence type="ECO:0000305" key="2"/>
<keyword id="KW-0028">Amino-acid biosynthesis</keyword>
<keyword id="KW-0055">Arginine biosynthesis</keyword>
<keyword id="KW-0963">Cytoplasm</keyword>
<keyword id="KW-0456">Lyase</keyword>
<name>ARLY_BORPA</name>
<accession>Q7WAE4</accession>
<reference key="1">
    <citation type="journal article" date="2003" name="Nat. Genet.">
        <title>Comparative analysis of the genome sequences of Bordetella pertussis, Bordetella parapertussis and Bordetella bronchiseptica.</title>
        <authorList>
            <person name="Parkhill J."/>
            <person name="Sebaihia M."/>
            <person name="Preston A."/>
            <person name="Murphy L.D."/>
            <person name="Thomson N.R."/>
            <person name="Harris D.E."/>
            <person name="Holden M.T.G."/>
            <person name="Churcher C.M."/>
            <person name="Bentley S.D."/>
            <person name="Mungall K.L."/>
            <person name="Cerdeno-Tarraga A.-M."/>
            <person name="Temple L."/>
            <person name="James K.D."/>
            <person name="Harris B."/>
            <person name="Quail M.A."/>
            <person name="Achtman M."/>
            <person name="Atkin R."/>
            <person name="Baker S."/>
            <person name="Basham D."/>
            <person name="Bason N."/>
            <person name="Cherevach I."/>
            <person name="Chillingworth T."/>
            <person name="Collins M."/>
            <person name="Cronin A."/>
            <person name="Davis P."/>
            <person name="Doggett J."/>
            <person name="Feltwell T."/>
            <person name="Goble A."/>
            <person name="Hamlin N."/>
            <person name="Hauser H."/>
            <person name="Holroyd S."/>
            <person name="Jagels K."/>
            <person name="Leather S."/>
            <person name="Moule S."/>
            <person name="Norberczak H."/>
            <person name="O'Neil S."/>
            <person name="Ormond D."/>
            <person name="Price C."/>
            <person name="Rabbinowitsch E."/>
            <person name="Rutter S."/>
            <person name="Sanders M."/>
            <person name="Saunders D."/>
            <person name="Seeger K."/>
            <person name="Sharp S."/>
            <person name="Simmonds M."/>
            <person name="Skelton J."/>
            <person name="Squares R."/>
            <person name="Squares S."/>
            <person name="Stevens K."/>
            <person name="Unwin L."/>
            <person name="Whitehead S."/>
            <person name="Barrell B.G."/>
            <person name="Maskell D.J."/>
        </authorList>
    </citation>
    <scope>NUCLEOTIDE SEQUENCE [LARGE SCALE GENOMIC DNA]</scope>
    <source>
        <strain>12822 / ATCC BAA-587 / NCTC 13253</strain>
    </source>
</reference>
<proteinExistence type="inferred from homology"/>
<sequence length="473" mass="52004">MANTSHSSQDQFANKAQAWSARFSEPVSDLVKRYTASVDFDKRMARHDIRGSLAHADMLAAQGIISAQDLADIQRGMQQILSEIDAGSFQWLLDLEDVHLNIEKRLVELVGDAGKRLHTGRSRNDQVATDIRLWLRDEIDTLVDLLRQLRHALATVALENAATIMPGFTHLQVAQPVTFGHHLLAYAEMFGRDAERLADCRRRVNRLPLGAAALAGTSYPIDRERVARTLGFDGVCRNSLDAVSDRDFGIEFCAAGALIMTHISRLSEELVLWMSPRVGFIDLADRFCTGSSIMPQKKNPDVPELARGKTGRVNGHLVALLTLMKGQPLAYNKDNQEDKEGLFDTADTLRDTLTIFADMAGGIKVKADNMRAAALQGFATATDLADYLVKRGLPFRDAHEIVAHAVRDCEQRGCDLADLSLADLQAYHPSIGEDIHQVLTLEGSVAARKHIGGTAPERVREEAQRVLAETAGA</sequence>
<dbReference type="EC" id="4.3.2.1" evidence="1"/>
<dbReference type="EMBL" id="BX640427">
    <property type="protein sequence ID" value="CAE36735.1"/>
    <property type="status" value="ALT_INIT"/>
    <property type="molecule type" value="Genomic_DNA"/>
</dbReference>
<dbReference type="RefSeq" id="WP_003812010.1">
    <property type="nucleotide sequence ID" value="NC_002928.3"/>
</dbReference>
<dbReference type="SMR" id="Q7WAE4"/>
<dbReference type="GeneID" id="93203192"/>
<dbReference type="KEGG" id="bpa:BPP1433"/>
<dbReference type="HOGENOM" id="CLU_027272_2_3_4"/>
<dbReference type="UniPathway" id="UPA00068">
    <property type="reaction ID" value="UER00114"/>
</dbReference>
<dbReference type="Proteomes" id="UP000001421">
    <property type="component" value="Chromosome"/>
</dbReference>
<dbReference type="GO" id="GO:0005829">
    <property type="term" value="C:cytosol"/>
    <property type="evidence" value="ECO:0007669"/>
    <property type="project" value="TreeGrafter"/>
</dbReference>
<dbReference type="GO" id="GO:0004056">
    <property type="term" value="F:argininosuccinate lyase activity"/>
    <property type="evidence" value="ECO:0007669"/>
    <property type="project" value="UniProtKB-UniRule"/>
</dbReference>
<dbReference type="GO" id="GO:0042450">
    <property type="term" value="P:arginine biosynthetic process via ornithine"/>
    <property type="evidence" value="ECO:0007669"/>
    <property type="project" value="InterPro"/>
</dbReference>
<dbReference type="GO" id="GO:0006526">
    <property type="term" value="P:L-arginine biosynthetic process"/>
    <property type="evidence" value="ECO:0007669"/>
    <property type="project" value="UniProtKB-UniRule"/>
</dbReference>
<dbReference type="CDD" id="cd01359">
    <property type="entry name" value="Argininosuccinate_lyase"/>
    <property type="match status" value="1"/>
</dbReference>
<dbReference type="FunFam" id="1.10.275.10:FF:000002">
    <property type="entry name" value="Argininosuccinate lyase"/>
    <property type="match status" value="1"/>
</dbReference>
<dbReference type="FunFam" id="1.10.40.30:FF:000001">
    <property type="entry name" value="Argininosuccinate lyase"/>
    <property type="match status" value="1"/>
</dbReference>
<dbReference type="FunFam" id="1.20.200.10:FF:000015">
    <property type="entry name" value="argininosuccinate lyase isoform X2"/>
    <property type="match status" value="1"/>
</dbReference>
<dbReference type="Gene3D" id="1.10.40.30">
    <property type="entry name" value="Fumarase/aspartase (C-terminal domain)"/>
    <property type="match status" value="1"/>
</dbReference>
<dbReference type="Gene3D" id="1.20.200.10">
    <property type="entry name" value="Fumarase/aspartase (Central domain)"/>
    <property type="match status" value="1"/>
</dbReference>
<dbReference type="Gene3D" id="1.10.275.10">
    <property type="entry name" value="Fumarase/aspartase (N-terminal domain)"/>
    <property type="match status" value="1"/>
</dbReference>
<dbReference type="HAMAP" id="MF_00006">
    <property type="entry name" value="Arg_succ_lyase"/>
    <property type="match status" value="1"/>
</dbReference>
<dbReference type="InterPro" id="IPR029419">
    <property type="entry name" value="Arg_succ_lyase_C"/>
</dbReference>
<dbReference type="InterPro" id="IPR009049">
    <property type="entry name" value="Argininosuccinate_lyase"/>
</dbReference>
<dbReference type="InterPro" id="IPR024083">
    <property type="entry name" value="Fumarase/histidase_N"/>
</dbReference>
<dbReference type="InterPro" id="IPR020557">
    <property type="entry name" value="Fumarate_lyase_CS"/>
</dbReference>
<dbReference type="InterPro" id="IPR000362">
    <property type="entry name" value="Fumarate_lyase_fam"/>
</dbReference>
<dbReference type="InterPro" id="IPR022761">
    <property type="entry name" value="Fumarate_lyase_N"/>
</dbReference>
<dbReference type="InterPro" id="IPR008948">
    <property type="entry name" value="L-Aspartase-like"/>
</dbReference>
<dbReference type="NCBIfam" id="TIGR00838">
    <property type="entry name" value="argH"/>
    <property type="match status" value="1"/>
</dbReference>
<dbReference type="PANTHER" id="PTHR43814">
    <property type="entry name" value="ARGININOSUCCINATE LYASE"/>
    <property type="match status" value="1"/>
</dbReference>
<dbReference type="PANTHER" id="PTHR43814:SF1">
    <property type="entry name" value="ARGININOSUCCINATE LYASE"/>
    <property type="match status" value="1"/>
</dbReference>
<dbReference type="Pfam" id="PF14698">
    <property type="entry name" value="ASL_C2"/>
    <property type="match status" value="1"/>
</dbReference>
<dbReference type="Pfam" id="PF00206">
    <property type="entry name" value="Lyase_1"/>
    <property type="match status" value="1"/>
</dbReference>
<dbReference type="PRINTS" id="PR00145">
    <property type="entry name" value="ARGSUCLYASE"/>
</dbReference>
<dbReference type="PRINTS" id="PR00149">
    <property type="entry name" value="FUMRATELYASE"/>
</dbReference>
<dbReference type="SUPFAM" id="SSF48557">
    <property type="entry name" value="L-aspartase-like"/>
    <property type="match status" value="1"/>
</dbReference>
<dbReference type="PROSITE" id="PS00163">
    <property type="entry name" value="FUMARATE_LYASES"/>
    <property type="match status" value="1"/>
</dbReference>